<proteinExistence type="inferred from homology"/>
<name>MURA_PSE14</name>
<protein>
    <recommendedName>
        <fullName evidence="1">UDP-N-acetylglucosamine 1-carboxyvinyltransferase</fullName>
        <ecNumber evidence="1">2.5.1.7</ecNumber>
    </recommendedName>
    <alternativeName>
        <fullName evidence="1">Enoylpyruvate transferase</fullName>
    </alternativeName>
    <alternativeName>
        <fullName evidence="1">UDP-N-acetylglucosamine enolpyruvyl transferase</fullName>
        <shortName evidence="1">EPT</shortName>
    </alternativeName>
</protein>
<comment type="function">
    <text evidence="1">Cell wall formation. Adds enolpyruvyl to UDP-N-acetylglucosamine.</text>
</comment>
<comment type="catalytic activity">
    <reaction evidence="1">
        <text>phosphoenolpyruvate + UDP-N-acetyl-alpha-D-glucosamine = UDP-N-acetyl-3-O-(1-carboxyvinyl)-alpha-D-glucosamine + phosphate</text>
        <dbReference type="Rhea" id="RHEA:18681"/>
        <dbReference type="ChEBI" id="CHEBI:43474"/>
        <dbReference type="ChEBI" id="CHEBI:57705"/>
        <dbReference type="ChEBI" id="CHEBI:58702"/>
        <dbReference type="ChEBI" id="CHEBI:68483"/>
        <dbReference type="EC" id="2.5.1.7"/>
    </reaction>
</comment>
<comment type="pathway">
    <text evidence="1">Cell wall biogenesis; peptidoglycan biosynthesis.</text>
</comment>
<comment type="subcellular location">
    <subcellularLocation>
        <location evidence="1">Cytoplasm</location>
    </subcellularLocation>
</comment>
<comment type="similarity">
    <text evidence="1">Belongs to the EPSP synthase family. MurA subfamily.</text>
</comment>
<sequence length="421" mass="44970">MDKLIITGGVRLDGEIRISGAKNSALPILAATLLADGPVTVQNLPHLHDITTMIELFGRMGIEPVIDEKLSVEIDPRTIKTLVAPYELVKTMRASILVLGPMVARFGEAEVALPGGCAIGSRPVDLHIRGLEAMGAIIDVEGGYIKAKAPEGGLRGANFFFDTVSVTGTENIMMAASLANGRSVLQNAAREPEVVDLANFLIAMGAKIHGAGTDTITIDGVKRLGPATYKVMPDRIETGTYLVAAAVTGGRVKVKDTDPTILEAVLLKLQEAGAEVTTGEDWIELNMHGKRPKAVNVRTAPYPAFPTDMQAQFISLNAIAEGTGAVIETIFENRFMHVYEMHRMGAQIQVEGNTAIVTGTEVLKGAPVMATDLRASASLVISALVAQGDTLIDRIYHIDRGYECIEEKLQMLGAKIRRVPG</sequence>
<accession>Q48EC7</accession>
<evidence type="ECO:0000255" key="1">
    <source>
        <dbReference type="HAMAP-Rule" id="MF_00111"/>
    </source>
</evidence>
<feature type="chain" id="PRO_0000231249" description="UDP-N-acetylglucosamine 1-carboxyvinyltransferase">
    <location>
        <begin position="1"/>
        <end position="421"/>
    </location>
</feature>
<feature type="active site" description="Proton donor" evidence="1">
    <location>
        <position position="117"/>
    </location>
</feature>
<feature type="binding site" evidence="1">
    <location>
        <begin position="22"/>
        <end position="23"/>
    </location>
    <ligand>
        <name>phosphoenolpyruvate</name>
        <dbReference type="ChEBI" id="CHEBI:58702"/>
    </ligand>
</feature>
<feature type="binding site" evidence="1">
    <location>
        <position position="93"/>
    </location>
    <ligand>
        <name>UDP-N-acetyl-alpha-D-glucosamine</name>
        <dbReference type="ChEBI" id="CHEBI:57705"/>
    </ligand>
</feature>
<feature type="binding site" evidence="1">
    <location>
        <begin position="122"/>
        <end position="126"/>
    </location>
    <ligand>
        <name>UDP-N-acetyl-alpha-D-glucosamine</name>
        <dbReference type="ChEBI" id="CHEBI:57705"/>
    </ligand>
</feature>
<feature type="binding site" evidence="1">
    <location>
        <position position="308"/>
    </location>
    <ligand>
        <name>UDP-N-acetyl-alpha-D-glucosamine</name>
        <dbReference type="ChEBI" id="CHEBI:57705"/>
    </ligand>
</feature>
<feature type="binding site" evidence="1">
    <location>
        <position position="330"/>
    </location>
    <ligand>
        <name>UDP-N-acetyl-alpha-D-glucosamine</name>
        <dbReference type="ChEBI" id="CHEBI:57705"/>
    </ligand>
</feature>
<feature type="modified residue" description="2-(S-cysteinyl)pyruvic acid O-phosphothioketal" evidence="1">
    <location>
        <position position="117"/>
    </location>
</feature>
<gene>
    <name evidence="1" type="primary">murA</name>
    <name type="ordered locus">PSPPH_4139</name>
</gene>
<reference key="1">
    <citation type="journal article" date="2005" name="J. Bacteriol.">
        <title>Whole-genome sequence analysis of Pseudomonas syringae pv. phaseolicola 1448A reveals divergence among pathovars in genes involved in virulence and transposition.</title>
        <authorList>
            <person name="Joardar V."/>
            <person name="Lindeberg M."/>
            <person name="Jackson R.W."/>
            <person name="Selengut J."/>
            <person name="Dodson R."/>
            <person name="Brinkac L.M."/>
            <person name="Daugherty S.C."/>
            <person name="DeBoy R.T."/>
            <person name="Durkin A.S."/>
            <person name="Gwinn Giglio M."/>
            <person name="Madupu R."/>
            <person name="Nelson W.C."/>
            <person name="Rosovitz M.J."/>
            <person name="Sullivan S.A."/>
            <person name="Crabtree J."/>
            <person name="Creasy T."/>
            <person name="Davidsen T.M."/>
            <person name="Haft D.H."/>
            <person name="Zafar N."/>
            <person name="Zhou L."/>
            <person name="Halpin R."/>
            <person name="Holley T."/>
            <person name="Khouri H.M."/>
            <person name="Feldblyum T.V."/>
            <person name="White O."/>
            <person name="Fraser C.M."/>
            <person name="Chatterjee A.K."/>
            <person name="Cartinhour S."/>
            <person name="Schneider D."/>
            <person name="Mansfield J.W."/>
            <person name="Collmer A."/>
            <person name="Buell R."/>
        </authorList>
    </citation>
    <scope>NUCLEOTIDE SEQUENCE [LARGE SCALE GENOMIC DNA]</scope>
    <source>
        <strain>1448A / Race 6</strain>
    </source>
</reference>
<dbReference type="EC" id="2.5.1.7" evidence="1"/>
<dbReference type="EMBL" id="CP000058">
    <property type="protein sequence ID" value="AAZ33832.1"/>
    <property type="molecule type" value="Genomic_DNA"/>
</dbReference>
<dbReference type="RefSeq" id="WP_002555078.1">
    <property type="nucleotide sequence ID" value="NC_005773.3"/>
</dbReference>
<dbReference type="SMR" id="Q48EC7"/>
<dbReference type="GeneID" id="96220613"/>
<dbReference type="KEGG" id="psp:PSPPH_4139"/>
<dbReference type="eggNOG" id="COG0766">
    <property type="taxonomic scope" value="Bacteria"/>
</dbReference>
<dbReference type="HOGENOM" id="CLU_027387_0_0_6"/>
<dbReference type="UniPathway" id="UPA00219"/>
<dbReference type="Proteomes" id="UP000000551">
    <property type="component" value="Chromosome"/>
</dbReference>
<dbReference type="GO" id="GO:0005737">
    <property type="term" value="C:cytoplasm"/>
    <property type="evidence" value="ECO:0007669"/>
    <property type="project" value="UniProtKB-SubCell"/>
</dbReference>
<dbReference type="GO" id="GO:0008760">
    <property type="term" value="F:UDP-N-acetylglucosamine 1-carboxyvinyltransferase activity"/>
    <property type="evidence" value="ECO:0007669"/>
    <property type="project" value="UniProtKB-UniRule"/>
</dbReference>
<dbReference type="GO" id="GO:0051301">
    <property type="term" value="P:cell division"/>
    <property type="evidence" value="ECO:0007669"/>
    <property type="project" value="UniProtKB-KW"/>
</dbReference>
<dbReference type="GO" id="GO:0071555">
    <property type="term" value="P:cell wall organization"/>
    <property type="evidence" value="ECO:0007669"/>
    <property type="project" value="UniProtKB-KW"/>
</dbReference>
<dbReference type="GO" id="GO:0009252">
    <property type="term" value="P:peptidoglycan biosynthetic process"/>
    <property type="evidence" value="ECO:0007669"/>
    <property type="project" value="UniProtKB-UniRule"/>
</dbReference>
<dbReference type="GO" id="GO:0008360">
    <property type="term" value="P:regulation of cell shape"/>
    <property type="evidence" value="ECO:0007669"/>
    <property type="project" value="UniProtKB-KW"/>
</dbReference>
<dbReference type="GO" id="GO:0019277">
    <property type="term" value="P:UDP-N-acetylgalactosamine biosynthetic process"/>
    <property type="evidence" value="ECO:0007669"/>
    <property type="project" value="InterPro"/>
</dbReference>
<dbReference type="CDD" id="cd01555">
    <property type="entry name" value="UdpNAET"/>
    <property type="match status" value="1"/>
</dbReference>
<dbReference type="FunFam" id="3.65.10.10:FF:000002">
    <property type="entry name" value="UDP-N-acetylglucosamine 1-carboxyvinyltransferase"/>
    <property type="match status" value="1"/>
</dbReference>
<dbReference type="Gene3D" id="3.65.10.10">
    <property type="entry name" value="Enolpyruvate transferase domain"/>
    <property type="match status" value="2"/>
</dbReference>
<dbReference type="HAMAP" id="MF_00111">
    <property type="entry name" value="MurA"/>
    <property type="match status" value="1"/>
</dbReference>
<dbReference type="InterPro" id="IPR001986">
    <property type="entry name" value="Enolpyruvate_Tfrase_dom"/>
</dbReference>
<dbReference type="InterPro" id="IPR036968">
    <property type="entry name" value="Enolpyruvate_Tfrase_sf"/>
</dbReference>
<dbReference type="InterPro" id="IPR050068">
    <property type="entry name" value="MurA_subfamily"/>
</dbReference>
<dbReference type="InterPro" id="IPR013792">
    <property type="entry name" value="RNA3'P_cycl/enolpyr_Trfase_a/b"/>
</dbReference>
<dbReference type="InterPro" id="IPR005750">
    <property type="entry name" value="UDP_GlcNAc_COvinyl_MurA"/>
</dbReference>
<dbReference type="NCBIfam" id="TIGR01072">
    <property type="entry name" value="murA"/>
    <property type="match status" value="1"/>
</dbReference>
<dbReference type="NCBIfam" id="NF006873">
    <property type="entry name" value="PRK09369.1"/>
    <property type="match status" value="1"/>
</dbReference>
<dbReference type="PANTHER" id="PTHR43783">
    <property type="entry name" value="UDP-N-ACETYLGLUCOSAMINE 1-CARBOXYVINYLTRANSFERASE"/>
    <property type="match status" value="1"/>
</dbReference>
<dbReference type="PANTHER" id="PTHR43783:SF1">
    <property type="entry name" value="UDP-N-ACETYLGLUCOSAMINE 1-CARBOXYVINYLTRANSFERASE"/>
    <property type="match status" value="1"/>
</dbReference>
<dbReference type="Pfam" id="PF00275">
    <property type="entry name" value="EPSP_synthase"/>
    <property type="match status" value="1"/>
</dbReference>
<dbReference type="SUPFAM" id="SSF55205">
    <property type="entry name" value="EPT/RTPC-like"/>
    <property type="match status" value="1"/>
</dbReference>
<keyword id="KW-0131">Cell cycle</keyword>
<keyword id="KW-0132">Cell division</keyword>
<keyword id="KW-0133">Cell shape</keyword>
<keyword id="KW-0961">Cell wall biogenesis/degradation</keyword>
<keyword id="KW-0963">Cytoplasm</keyword>
<keyword id="KW-0573">Peptidoglycan synthesis</keyword>
<keyword id="KW-0670">Pyruvate</keyword>
<keyword id="KW-0808">Transferase</keyword>
<organism>
    <name type="scientific">Pseudomonas savastanoi pv. phaseolicola (strain 1448A / Race 6)</name>
    <name type="common">Pseudomonas syringae pv. phaseolicola (strain 1448A / Race 6)</name>
    <dbReference type="NCBI Taxonomy" id="264730"/>
    <lineage>
        <taxon>Bacteria</taxon>
        <taxon>Pseudomonadati</taxon>
        <taxon>Pseudomonadota</taxon>
        <taxon>Gammaproteobacteria</taxon>
        <taxon>Pseudomonadales</taxon>
        <taxon>Pseudomonadaceae</taxon>
        <taxon>Pseudomonas</taxon>
    </lineage>
</organism>